<accession>A8A5E6</accession>
<organism>
    <name type="scientific">Escherichia coli O9:H4 (strain HS)</name>
    <dbReference type="NCBI Taxonomy" id="331112"/>
    <lineage>
        <taxon>Bacteria</taxon>
        <taxon>Pseudomonadati</taxon>
        <taxon>Pseudomonadota</taxon>
        <taxon>Gammaproteobacteria</taxon>
        <taxon>Enterobacterales</taxon>
        <taxon>Enterobacteriaceae</taxon>
        <taxon>Escherichia</taxon>
    </lineage>
</organism>
<name>EFTU1_ECOHS</name>
<gene>
    <name evidence="2" type="primary">tuf1</name>
    <name type="ordered locus">EcHS_A3535</name>
</gene>
<keyword id="KW-0963">Cytoplasm</keyword>
<keyword id="KW-0251">Elongation factor</keyword>
<keyword id="KW-0342">GTP-binding</keyword>
<keyword id="KW-0378">Hydrolase</keyword>
<keyword id="KW-0460">Magnesium</keyword>
<keyword id="KW-0479">Metal-binding</keyword>
<keyword id="KW-0547">Nucleotide-binding</keyword>
<keyword id="KW-0648">Protein biosynthesis</keyword>
<evidence type="ECO:0000250" key="1"/>
<evidence type="ECO:0000255" key="2">
    <source>
        <dbReference type="HAMAP-Rule" id="MF_00118"/>
    </source>
</evidence>
<comment type="function">
    <text evidence="2">GTP hydrolase that promotes the GTP-dependent binding of aminoacyl-tRNA to the A-site of ribosomes during protein biosynthesis.</text>
</comment>
<comment type="catalytic activity">
    <reaction evidence="2">
        <text>GTP + H2O = GDP + phosphate + H(+)</text>
        <dbReference type="Rhea" id="RHEA:19669"/>
        <dbReference type="ChEBI" id="CHEBI:15377"/>
        <dbReference type="ChEBI" id="CHEBI:15378"/>
        <dbReference type="ChEBI" id="CHEBI:37565"/>
        <dbReference type="ChEBI" id="CHEBI:43474"/>
        <dbReference type="ChEBI" id="CHEBI:58189"/>
        <dbReference type="EC" id="3.6.5.3"/>
    </reaction>
    <physiologicalReaction direction="left-to-right" evidence="2">
        <dbReference type="Rhea" id="RHEA:19670"/>
    </physiologicalReaction>
</comment>
<comment type="subunit">
    <text evidence="2">Monomer.</text>
</comment>
<comment type="subcellular location">
    <subcellularLocation>
        <location evidence="2">Cytoplasm</location>
    </subcellularLocation>
</comment>
<comment type="similarity">
    <text evidence="2">Belongs to the TRAFAC class translation factor GTPase superfamily. Classic translation factor GTPase family. EF-Tu/EF-1A subfamily.</text>
</comment>
<dbReference type="EC" id="3.6.5.3" evidence="2"/>
<dbReference type="EMBL" id="CP000802">
    <property type="protein sequence ID" value="ABV07750.1"/>
    <property type="molecule type" value="Genomic_DNA"/>
</dbReference>
<dbReference type="SMR" id="A8A5E6"/>
<dbReference type="KEGG" id="ecx:EcHS_A3535"/>
<dbReference type="HOGENOM" id="CLU_007265_0_2_6"/>
<dbReference type="GO" id="GO:0005829">
    <property type="term" value="C:cytosol"/>
    <property type="evidence" value="ECO:0007669"/>
    <property type="project" value="TreeGrafter"/>
</dbReference>
<dbReference type="GO" id="GO:0005525">
    <property type="term" value="F:GTP binding"/>
    <property type="evidence" value="ECO:0007669"/>
    <property type="project" value="UniProtKB-UniRule"/>
</dbReference>
<dbReference type="GO" id="GO:0003924">
    <property type="term" value="F:GTPase activity"/>
    <property type="evidence" value="ECO:0007669"/>
    <property type="project" value="InterPro"/>
</dbReference>
<dbReference type="GO" id="GO:0097216">
    <property type="term" value="F:guanosine tetraphosphate binding"/>
    <property type="evidence" value="ECO:0007669"/>
    <property type="project" value="UniProtKB-ARBA"/>
</dbReference>
<dbReference type="GO" id="GO:0003746">
    <property type="term" value="F:translation elongation factor activity"/>
    <property type="evidence" value="ECO:0007669"/>
    <property type="project" value="UniProtKB-UniRule"/>
</dbReference>
<dbReference type="CDD" id="cd01884">
    <property type="entry name" value="EF_Tu"/>
    <property type="match status" value="1"/>
</dbReference>
<dbReference type="CDD" id="cd03697">
    <property type="entry name" value="EFTU_II"/>
    <property type="match status" value="1"/>
</dbReference>
<dbReference type="CDD" id="cd03707">
    <property type="entry name" value="EFTU_III"/>
    <property type="match status" value="1"/>
</dbReference>
<dbReference type="FunFam" id="2.40.30.10:FF:000001">
    <property type="entry name" value="Elongation factor Tu"/>
    <property type="match status" value="1"/>
</dbReference>
<dbReference type="FunFam" id="3.40.50.300:FF:000003">
    <property type="entry name" value="Elongation factor Tu"/>
    <property type="match status" value="1"/>
</dbReference>
<dbReference type="Gene3D" id="3.40.50.300">
    <property type="entry name" value="P-loop containing nucleotide triphosphate hydrolases"/>
    <property type="match status" value="1"/>
</dbReference>
<dbReference type="Gene3D" id="2.40.30.10">
    <property type="entry name" value="Translation factors"/>
    <property type="match status" value="2"/>
</dbReference>
<dbReference type="HAMAP" id="MF_00118_B">
    <property type="entry name" value="EF_Tu_B"/>
    <property type="match status" value="1"/>
</dbReference>
<dbReference type="InterPro" id="IPR041709">
    <property type="entry name" value="EF-Tu_GTP-bd"/>
</dbReference>
<dbReference type="InterPro" id="IPR050055">
    <property type="entry name" value="EF-Tu_GTPase"/>
</dbReference>
<dbReference type="InterPro" id="IPR004161">
    <property type="entry name" value="EFTu-like_2"/>
</dbReference>
<dbReference type="InterPro" id="IPR033720">
    <property type="entry name" value="EFTU_2"/>
</dbReference>
<dbReference type="InterPro" id="IPR031157">
    <property type="entry name" value="G_TR_CS"/>
</dbReference>
<dbReference type="InterPro" id="IPR027417">
    <property type="entry name" value="P-loop_NTPase"/>
</dbReference>
<dbReference type="InterPro" id="IPR005225">
    <property type="entry name" value="Small_GTP-bd"/>
</dbReference>
<dbReference type="InterPro" id="IPR000795">
    <property type="entry name" value="T_Tr_GTP-bd_dom"/>
</dbReference>
<dbReference type="InterPro" id="IPR009000">
    <property type="entry name" value="Transl_B-barrel_sf"/>
</dbReference>
<dbReference type="InterPro" id="IPR009001">
    <property type="entry name" value="Transl_elong_EF1A/Init_IF2_C"/>
</dbReference>
<dbReference type="InterPro" id="IPR004541">
    <property type="entry name" value="Transl_elong_EFTu/EF1A_bac/org"/>
</dbReference>
<dbReference type="InterPro" id="IPR004160">
    <property type="entry name" value="Transl_elong_EFTu/EF1A_C"/>
</dbReference>
<dbReference type="NCBIfam" id="TIGR00485">
    <property type="entry name" value="EF-Tu"/>
    <property type="match status" value="1"/>
</dbReference>
<dbReference type="NCBIfam" id="NF000766">
    <property type="entry name" value="PRK00049.1"/>
    <property type="match status" value="1"/>
</dbReference>
<dbReference type="NCBIfam" id="NF009372">
    <property type="entry name" value="PRK12735.1"/>
    <property type="match status" value="1"/>
</dbReference>
<dbReference type="NCBIfam" id="NF009373">
    <property type="entry name" value="PRK12736.1"/>
    <property type="match status" value="1"/>
</dbReference>
<dbReference type="NCBIfam" id="TIGR00231">
    <property type="entry name" value="small_GTP"/>
    <property type="match status" value="1"/>
</dbReference>
<dbReference type="PANTHER" id="PTHR43721:SF22">
    <property type="entry name" value="ELONGATION FACTOR TU, MITOCHONDRIAL"/>
    <property type="match status" value="1"/>
</dbReference>
<dbReference type="PANTHER" id="PTHR43721">
    <property type="entry name" value="ELONGATION FACTOR TU-RELATED"/>
    <property type="match status" value="1"/>
</dbReference>
<dbReference type="Pfam" id="PF00009">
    <property type="entry name" value="GTP_EFTU"/>
    <property type="match status" value="1"/>
</dbReference>
<dbReference type="Pfam" id="PF03144">
    <property type="entry name" value="GTP_EFTU_D2"/>
    <property type="match status" value="1"/>
</dbReference>
<dbReference type="Pfam" id="PF03143">
    <property type="entry name" value="GTP_EFTU_D3"/>
    <property type="match status" value="1"/>
</dbReference>
<dbReference type="PRINTS" id="PR00315">
    <property type="entry name" value="ELONGATNFCT"/>
</dbReference>
<dbReference type="SUPFAM" id="SSF50465">
    <property type="entry name" value="EF-Tu/eEF-1alpha/eIF2-gamma C-terminal domain"/>
    <property type="match status" value="1"/>
</dbReference>
<dbReference type="SUPFAM" id="SSF52540">
    <property type="entry name" value="P-loop containing nucleoside triphosphate hydrolases"/>
    <property type="match status" value="1"/>
</dbReference>
<dbReference type="SUPFAM" id="SSF50447">
    <property type="entry name" value="Translation proteins"/>
    <property type="match status" value="1"/>
</dbReference>
<dbReference type="PROSITE" id="PS00301">
    <property type="entry name" value="G_TR_1"/>
    <property type="match status" value="1"/>
</dbReference>
<dbReference type="PROSITE" id="PS51722">
    <property type="entry name" value="G_TR_2"/>
    <property type="match status" value="1"/>
</dbReference>
<sequence length="394" mass="43284">MSKEKFERTKPHVNVGTIGHVDHGKTTLTAAITTVLAKTYGGAARAFDQIDNAPEEKARGITINTSHVEYDTPTRHYAHVDCPGHADYVKNMITGAAQMDGAILVVAATDGPMPQTREHILLGRQVGVPYIIVFLNKCDMVDDEELLELVEMEVRELLSQYDFPGDDTPIVRGSALKALEGDAEWEAKILELAGFLDSYIPEPERAIDKPFLLPIEDVFSISGRGTVVTGRVERGIIKVGEEVEIVGIKETQKSTCTGVEMFRKLLDEGRAGENVGVLLRGIKREEIERGQVLAKPGTIKPHTKFESEVYILSKDEGGRHTPFFKGYRPQFYFRTTDVTGTIELPEGVEMVMPGDNIKMVVTLIHPIAMDDGLRFAIREGGRTVGAGVVAKVLG</sequence>
<protein>
    <recommendedName>
        <fullName evidence="2">Elongation factor Tu 1</fullName>
        <shortName evidence="2">EF-Tu 1</shortName>
        <ecNumber evidence="2">3.6.5.3</ecNumber>
    </recommendedName>
</protein>
<proteinExistence type="inferred from homology"/>
<reference key="1">
    <citation type="journal article" date="2008" name="J. Bacteriol.">
        <title>The pangenome structure of Escherichia coli: comparative genomic analysis of E. coli commensal and pathogenic isolates.</title>
        <authorList>
            <person name="Rasko D.A."/>
            <person name="Rosovitz M.J."/>
            <person name="Myers G.S.A."/>
            <person name="Mongodin E.F."/>
            <person name="Fricke W.F."/>
            <person name="Gajer P."/>
            <person name="Crabtree J."/>
            <person name="Sebaihia M."/>
            <person name="Thomson N.R."/>
            <person name="Chaudhuri R."/>
            <person name="Henderson I.R."/>
            <person name="Sperandio V."/>
            <person name="Ravel J."/>
        </authorList>
    </citation>
    <scope>NUCLEOTIDE SEQUENCE [LARGE SCALE GENOMIC DNA]</scope>
    <source>
        <strain>HS</strain>
    </source>
</reference>
<feature type="chain" id="PRO_0000337392" description="Elongation factor Tu 1">
    <location>
        <begin position="1"/>
        <end position="394"/>
    </location>
</feature>
<feature type="domain" description="tr-type G">
    <location>
        <begin position="10"/>
        <end position="204"/>
    </location>
</feature>
<feature type="region of interest" description="G1" evidence="1">
    <location>
        <begin position="19"/>
        <end position="26"/>
    </location>
</feature>
<feature type="region of interest" description="G2" evidence="1">
    <location>
        <begin position="60"/>
        <end position="64"/>
    </location>
</feature>
<feature type="region of interest" description="G3" evidence="1">
    <location>
        <begin position="81"/>
        <end position="84"/>
    </location>
</feature>
<feature type="region of interest" description="G4" evidence="1">
    <location>
        <begin position="136"/>
        <end position="139"/>
    </location>
</feature>
<feature type="region of interest" description="G5" evidence="1">
    <location>
        <begin position="174"/>
        <end position="176"/>
    </location>
</feature>
<feature type="binding site" evidence="2">
    <location>
        <begin position="19"/>
        <end position="26"/>
    </location>
    <ligand>
        <name>GTP</name>
        <dbReference type="ChEBI" id="CHEBI:37565"/>
    </ligand>
</feature>
<feature type="binding site" evidence="2">
    <location>
        <position position="26"/>
    </location>
    <ligand>
        <name>Mg(2+)</name>
        <dbReference type="ChEBI" id="CHEBI:18420"/>
    </ligand>
</feature>
<feature type="binding site" evidence="2">
    <location>
        <begin position="81"/>
        <end position="85"/>
    </location>
    <ligand>
        <name>GTP</name>
        <dbReference type="ChEBI" id="CHEBI:37565"/>
    </ligand>
</feature>
<feature type="binding site" evidence="2">
    <location>
        <begin position="136"/>
        <end position="139"/>
    </location>
    <ligand>
        <name>GTP</name>
        <dbReference type="ChEBI" id="CHEBI:37565"/>
    </ligand>
</feature>